<dbReference type="EMBL" id="AY028381">
    <property type="protein sequence ID" value="AAY99443.1"/>
    <property type="molecule type" value="Genomic_DNA"/>
</dbReference>
<dbReference type="RefSeq" id="WP_045634942.1">
    <property type="nucleotide sequence ID" value="NZ_RJVY01000036.1"/>
</dbReference>
<dbReference type="SMR" id="Q4L2X3"/>
<dbReference type="OrthoDB" id="2237332at2"/>
<dbReference type="GO" id="GO:0005886">
    <property type="term" value="C:plasma membrane"/>
    <property type="evidence" value="ECO:0007669"/>
    <property type="project" value="UniProtKB-SubCell"/>
</dbReference>
<dbReference type="GO" id="GO:0015031">
    <property type="term" value="P:protein transport"/>
    <property type="evidence" value="ECO:0007669"/>
    <property type="project" value="UniProtKB-KW"/>
</dbReference>
<dbReference type="InterPro" id="IPR031551">
    <property type="entry name" value="Asp4"/>
</dbReference>
<dbReference type="Pfam" id="PF16996">
    <property type="entry name" value="Asp4"/>
    <property type="match status" value="1"/>
</dbReference>
<accession>Q4L2X3</accession>
<feature type="chain" id="PRO_0000414201" description="Accessory secretory protein Asp4">
    <location>
        <begin position="1"/>
        <end position="60"/>
    </location>
</feature>
<feature type="transmembrane region" description="Helical" evidence="1">
    <location>
        <begin position="37"/>
        <end position="57"/>
    </location>
</feature>
<evidence type="ECO:0000255" key="1"/>
<evidence type="ECO:0000269" key="2">
    <source>
    </source>
</evidence>
<evidence type="ECO:0000305" key="3"/>
<protein>
    <recommendedName>
        <fullName>Accessory secretory protein Asp4</fullName>
    </recommendedName>
    <alternativeName>
        <fullName>Orf5</fullName>
    </alternativeName>
</protein>
<gene>
    <name type="primary">asp4</name>
</gene>
<comment type="function">
    <text evidence="2">Part of the accessory SecA2/SecY2 system specifically required to export GspB, a serine-rich repeat cell wall protein encoded upstream in the same operon.</text>
</comment>
<comment type="subunit">
    <text>Part of the accessory SecA2/SecY2 protein translocation apparatus required to export cell wall protein GspB.</text>
</comment>
<comment type="subcellular location">
    <subcellularLocation>
        <location evidence="3">Cell membrane</location>
        <topology evidence="3">Single-pass membrane protein</topology>
    </subcellularLocation>
</comment>
<comment type="disruption phenotype">
    <text evidence="2">No export of mature cell wall protein GspB, a small amount of unprocessed protein is exported to the cell wall while the rest accumulates intracellularly, probably in a glycosylated form. Cells bind less well to platelets.</text>
</comment>
<organism>
    <name type="scientific">Streptococcus gordonii</name>
    <dbReference type="NCBI Taxonomy" id="1302"/>
    <lineage>
        <taxon>Bacteria</taxon>
        <taxon>Bacillati</taxon>
        <taxon>Bacillota</taxon>
        <taxon>Bacilli</taxon>
        <taxon>Lactobacillales</taxon>
        <taxon>Streptococcaceae</taxon>
        <taxon>Streptococcus</taxon>
    </lineage>
</organism>
<name>ASP4_STRGN</name>
<sequence length="60" mass="6728">MAKKDLFHKDIEGRLDELKHGKPKKEKASLGENLNKIFVIALGLMILIGLIFTLIGALRK</sequence>
<proteinExistence type="predicted"/>
<reference key="1">
    <citation type="journal article" date="2005" name="J. Bacteriol.">
        <title>Two additional components of the accessory sec system mediating export of the Streptococcus gordonii platelet-binding protein GspB.</title>
        <authorList>
            <person name="Takamatsu D."/>
            <person name="Bensing B.A."/>
            <person name="Sullam P.M."/>
        </authorList>
    </citation>
    <scope>NUCLEOTIDE SEQUENCE [GENOMIC DNA]</scope>
    <scope>FUNCTION</scope>
    <scope>DISRUPTION PHENOTYPE</scope>
    <source>
        <strain>M99</strain>
    </source>
</reference>
<keyword id="KW-1003">Cell membrane</keyword>
<keyword id="KW-0472">Membrane</keyword>
<keyword id="KW-0653">Protein transport</keyword>
<keyword id="KW-0811">Translocation</keyword>
<keyword id="KW-0812">Transmembrane</keyword>
<keyword id="KW-1133">Transmembrane helix</keyword>
<keyword id="KW-0813">Transport</keyword>